<comment type="function">
    <text evidence="1">Catalyzes the transfer of acetyl from acetyl-CoA to desacetylmycothiol (Cys-GlcN-Ins) to form mycothiol.</text>
</comment>
<comment type="catalytic activity">
    <reaction evidence="1">
        <text>1D-myo-inositol 2-(L-cysteinylamino)-2-deoxy-alpha-D-glucopyranoside + acetyl-CoA = mycothiol + CoA + H(+)</text>
        <dbReference type="Rhea" id="RHEA:26172"/>
        <dbReference type="ChEBI" id="CHEBI:15378"/>
        <dbReference type="ChEBI" id="CHEBI:16768"/>
        <dbReference type="ChEBI" id="CHEBI:57287"/>
        <dbReference type="ChEBI" id="CHEBI:57288"/>
        <dbReference type="ChEBI" id="CHEBI:58887"/>
        <dbReference type="EC" id="2.3.1.189"/>
    </reaction>
</comment>
<comment type="subunit">
    <text evidence="1">Monomer.</text>
</comment>
<comment type="similarity">
    <text evidence="1">Belongs to the acetyltransferase family. MshD subfamily.</text>
</comment>
<dbReference type="EC" id="2.3.1.189" evidence="1"/>
<dbReference type="EMBL" id="FN554889">
    <property type="protein sequence ID" value="CBG71998.1"/>
    <property type="molecule type" value="Genomic_DNA"/>
</dbReference>
<dbReference type="RefSeq" id="WP_013002585.1">
    <property type="nucleotide sequence ID" value="NC_013929.1"/>
</dbReference>
<dbReference type="SMR" id="C9ZFL1"/>
<dbReference type="STRING" id="680198.SCAB_49481"/>
<dbReference type="GeneID" id="24313179"/>
<dbReference type="KEGG" id="scb:SCAB_49481"/>
<dbReference type="eggNOG" id="COG0456">
    <property type="taxonomic scope" value="Bacteria"/>
</dbReference>
<dbReference type="HOGENOM" id="CLU_068014_0_0_11"/>
<dbReference type="Proteomes" id="UP000001444">
    <property type="component" value="Chromosome"/>
</dbReference>
<dbReference type="GO" id="GO:0035447">
    <property type="term" value="F:mycothiol synthase activity"/>
    <property type="evidence" value="ECO:0007669"/>
    <property type="project" value="UniProtKB-UniRule"/>
</dbReference>
<dbReference type="GO" id="GO:0010125">
    <property type="term" value="P:mycothiol biosynthetic process"/>
    <property type="evidence" value="ECO:0007669"/>
    <property type="project" value="UniProtKB-UniRule"/>
</dbReference>
<dbReference type="CDD" id="cd04301">
    <property type="entry name" value="NAT_SF"/>
    <property type="match status" value="2"/>
</dbReference>
<dbReference type="Gene3D" id="3.40.630.30">
    <property type="match status" value="1"/>
</dbReference>
<dbReference type="HAMAP" id="MF_01698">
    <property type="entry name" value="MshD"/>
    <property type="match status" value="1"/>
</dbReference>
<dbReference type="InterPro" id="IPR016181">
    <property type="entry name" value="Acyl_CoA_acyltransferase"/>
</dbReference>
<dbReference type="InterPro" id="IPR050832">
    <property type="entry name" value="Bact_Acetyltransf"/>
</dbReference>
<dbReference type="InterPro" id="IPR000182">
    <property type="entry name" value="GNAT_dom"/>
</dbReference>
<dbReference type="InterPro" id="IPR017813">
    <property type="entry name" value="Mycothiol_AcTrfase"/>
</dbReference>
<dbReference type="NCBIfam" id="TIGR03448">
    <property type="entry name" value="mycothiol_MshD"/>
    <property type="match status" value="1"/>
</dbReference>
<dbReference type="PANTHER" id="PTHR43877">
    <property type="entry name" value="AMINOALKYLPHOSPHONATE N-ACETYLTRANSFERASE-RELATED-RELATED"/>
    <property type="match status" value="1"/>
</dbReference>
<dbReference type="Pfam" id="PF00583">
    <property type="entry name" value="Acetyltransf_1"/>
    <property type="match status" value="2"/>
</dbReference>
<dbReference type="PIRSF" id="PIRSF021524">
    <property type="entry name" value="MSH_acetyltransferase"/>
    <property type="match status" value="1"/>
</dbReference>
<dbReference type="SUPFAM" id="SSF55729">
    <property type="entry name" value="Acyl-CoA N-acyltransferases (Nat)"/>
    <property type="match status" value="1"/>
</dbReference>
<dbReference type="PROSITE" id="PS51186">
    <property type="entry name" value="GNAT"/>
    <property type="match status" value="2"/>
</dbReference>
<organism>
    <name type="scientific">Streptomyces scabiei (strain 87.22)</name>
    <dbReference type="NCBI Taxonomy" id="680198"/>
    <lineage>
        <taxon>Bacteria</taxon>
        <taxon>Bacillati</taxon>
        <taxon>Actinomycetota</taxon>
        <taxon>Actinomycetes</taxon>
        <taxon>Kitasatosporales</taxon>
        <taxon>Streptomycetaceae</taxon>
        <taxon>Streptomyces</taxon>
    </lineage>
</organism>
<accession>C9ZFL1</accession>
<keyword id="KW-0012">Acyltransferase</keyword>
<keyword id="KW-1185">Reference proteome</keyword>
<keyword id="KW-0677">Repeat</keyword>
<keyword id="KW-0808">Transferase</keyword>
<feature type="chain" id="PRO_0000400305" description="Mycothiol acetyltransferase">
    <location>
        <begin position="1"/>
        <end position="308"/>
    </location>
</feature>
<feature type="domain" description="N-acetyltransferase 1" evidence="1">
    <location>
        <begin position="15"/>
        <end position="152"/>
    </location>
</feature>
<feature type="domain" description="N-acetyltransferase 2" evidence="1">
    <location>
        <begin position="165"/>
        <end position="308"/>
    </location>
</feature>
<feature type="region of interest" description="Disordered" evidence="2">
    <location>
        <begin position="1"/>
        <end position="20"/>
    </location>
</feature>
<feature type="binding site" evidence="1">
    <location>
        <position position="47"/>
    </location>
    <ligand>
        <name>1D-myo-inositol 2-(L-cysteinylamino)-2-deoxy-alpha-D-glucopyranoside</name>
        <dbReference type="ChEBI" id="CHEBI:58887"/>
    </ligand>
</feature>
<feature type="binding site" evidence="1">
    <location>
        <begin position="91"/>
        <end position="93"/>
    </location>
    <ligand>
        <name>acetyl-CoA</name>
        <dbReference type="ChEBI" id="CHEBI:57288"/>
        <label>1</label>
    </ligand>
</feature>
<feature type="binding site" evidence="1">
    <location>
        <position position="192"/>
    </location>
    <ligand>
        <name>1D-myo-inositol 2-(L-cysteinylamino)-2-deoxy-alpha-D-glucopyranoside</name>
        <dbReference type="ChEBI" id="CHEBI:58887"/>
    </ligand>
</feature>
<feature type="binding site" evidence="1">
    <location>
        <position position="231"/>
    </location>
    <ligand>
        <name>1D-myo-inositol 2-(L-cysteinylamino)-2-deoxy-alpha-D-glucopyranoside</name>
        <dbReference type="ChEBI" id="CHEBI:58887"/>
    </ligand>
</feature>
<feature type="binding site" evidence="1">
    <location>
        <position position="240"/>
    </location>
    <ligand>
        <name>1D-myo-inositol 2-(L-cysteinylamino)-2-deoxy-alpha-D-glucopyranoside</name>
        <dbReference type="ChEBI" id="CHEBI:58887"/>
    </ligand>
</feature>
<feature type="binding site" evidence="1">
    <location>
        <begin position="244"/>
        <end position="246"/>
    </location>
    <ligand>
        <name>acetyl-CoA</name>
        <dbReference type="ChEBI" id="CHEBI:57288"/>
        <label>2</label>
    </ligand>
</feature>
<feature type="binding site" evidence="1">
    <location>
        <begin position="251"/>
        <end position="257"/>
    </location>
    <ligand>
        <name>acetyl-CoA</name>
        <dbReference type="ChEBI" id="CHEBI:57288"/>
        <label>2</label>
    </ligand>
</feature>
<feature type="binding site" evidence="1">
    <location>
        <position position="278"/>
    </location>
    <ligand>
        <name>1D-myo-inositol 2-(L-cysteinylamino)-2-deoxy-alpha-D-glucopyranoside</name>
        <dbReference type="ChEBI" id="CHEBI:58887"/>
    </ligand>
</feature>
<evidence type="ECO:0000255" key="1">
    <source>
        <dbReference type="HAMAP-Rule" id="MF_01698"/>
    </source>
</evidence>
<evidence type="ECO:0000256" key="2">
    <source>
        <dbReference type="SAM" id="MobiDB-lite"/>
    </source>
</evidence>
<sequence length="308" mass="33267">MTSDDTAQPSGARRIETRPDLTAAQKDAVLALLDEAAQVDGQQAVSEQGRLQLRGGPREGVRHLLLSVGEDLVGYAQLEDNDPVEAPAAELVVHPSHRGHGHGRALGSALLAESGKRLRVWAHGGHSAARHLAQVLGLTLFRELRQMRRSLTDFDPAEPVLPEGVTVRAFVPGEDDAAWLAANAEAFAHHPEQGSLTQRDLDDRKGEPWFDPAGFFLAFRGEELVGFHWTKAHAAEQLGEVYVVGVRPGAQGGGLGKALTTIGLRHLAAQGLPTAMLYVDADNKAAVTVYERLGFVTYETDLMYRSET</sequence>
<protein>
    <recommendedName>
        <fullName evidence="1">Mycothiol acetyltransferase</fullName>
        <shortName evidence="1">MSH acetyltransferase</shortName>
        <ecNumber evidence="1">2.3.1.189</ecNumber>
    </recommendedName>
    <alternativeName>
        <fullName evidence="1">Mycothiol synthase</fullName>
    </alternativeName>
</protein>
<gene>
    <name evidence="1" type="primary">mshD</name>
    <name type="ordered locus">SCAB_49481</name>
</gene>
<name>MSHD_STRSW</name>
<proteinExistence type="inferred from homology"/>
<reference key="1">
    <citation type="journal article" date="2010" name="Mol. Plant Microbe Interact.">
        <title>Streptomyces scabies 87-22 contains a coronafacic acid-like biosynthetic cluster that contributes to plant-microbe interactions.</title>
        <authorList>
            <person name="Bignell D.R."/>
            <person name="Seipke R.F."/>
            <person name="Huguet-Tapia J.C."/>
            <person name="Chambers A.H."/>
            <person name="Parry R.J."/>
            <person name="Loria R."/>
        </authorList>
    </citation>
    <scope>NUCLEOTIDE SEQUENCE [LARGE SCALE GENOMIC DNA]</scope>
    <source>
        <strain>87.22</strain>
    </source>
</reference>